<evidence type="ECO:0000250" key="1"/>
<evidence type="ECO:0000255" key="2"/>
<evidence type="ECO:0000305" key="3"/>
<organism>
    <name type="scientific">Diplobatis ommata</name>
    <name type="common">Ocellated electric ray</name>
    <name type="synonym">Discopyge ommata</name>
    <dbReference type="NCBI Taxonomy" id="1870830"/>
    <lineage>
        <taxon>Eukaryota</taxon>
        <taxon>Metazoa</taxon>
        <taxon>Chordata</taxon>
        <taxon>Craniata</taxon>
        <taxon>Vertebrata</taxon>
        <taxon>Chondrichthyes</taxon>
        <taxon>Elasmobranchii</taxon>
        <taxon>Batoidea</taxon>
        <taxon>Torpediniformes</taxon>
        <taxon>Narcinidae</taxon>
        <taxon>Diplobatis</taxon>
    </lineage>
</organism>
<accession>P29240</accession>
<protein>
    <recommendedName>
        <fullName>5'-nucleotidase</fullName>
        <ecNumber>3.1.3.5</ecNumber>
    </recommendedName>
    <alternativeName>
        <fullName>Ecto-nucleotidase</fullName>
    </alternativeName>
</protein>
<comment type="function">
    <text>Hydrolyzes extracellular nucleotides into membrane permeable nucleosides.</text>
</comment>
<comment type="catalytic activity">
    <reaction>
        <text>a ribonucleoside 5'-phosphate + H2O = a ribonucleoside + phosphate</text>
        <dbReference type="Rhea" id="RHEA:12484"/>
        <dbReference type="ChEBI" id="CHEBI:15377"/>
        <dbReference type="ChEBI" id="CHEBI:18254"/>
        <dbReference type="ChEBI" id="CHEBI:43474"/>
        <dbReference type="ChEBI" id="CHEBI:58043"/>
        <dbReference type="EC" id="3.1.3.5"/>
    </reaction>
</comment>
<comment type="cofactor">
    <cofactor>
        <name>Zn(2+)</name>
        <dbReference type="ChEBI" id="CHEBI:29105"/>
    </cofactor>
</comment>
<comment type="subunit">
    <text evidence="1">Homodimer.</text>
</comment>
<comment type="subcellular location">
    <subcellularLocation>
        <location>Cell membrane</location>
        <topology>Lipid-anchor</topology>
        <topology>GPI-anchor</topology>
    </subcellularLocation>
</comment>
<comment type="similarity">
    <text evidence="3">Belongs to the 5'-nucleotidase family.</text>
</comment>
<proteinExistence type="evidence at transcript level"/>
<keyword id="KW-1003">Cell membrane</keyword>
<keyword id="KW-1015">Disulfide bond</keyword>
<keyword id="KW-0325">Glycoprotein</keyword>
<keyword id="KW-0336">GPI-anchor</keyword>
<keyword id="KW-0378">Hydrolase</keyword>
<keyword id="KW-0449">Lipoprotein</keyword>
<keyword id="KW-0472">Membrane</keyword>
<keyword id="KW-0479">Metal-binding</keyword>
<keyword id="KW-0547">Nucleotide-binding</keyword>
<keyword id="KW-0732">Signal</keyword>
<keyword id="KW-0862">Zinc</keyword>
<dbReference type="EC" id="3.1.3.5"/>
<dbReference type="EMBL" id="X62278">
    <property type="protein sequence ID" value="CAA44168.1"/>
    <property type="molecule type" value="mRNA"/>
</dbReference>
<dbReference type="PIR" id="S19564">
    <property type="entry name" value="S19564"/>
</dbReference>
<dbReference type="SMR" id="P29240"/>
<dbReference type="GO" id="GO:0005886">
    <property type="term" value="C:plasma membrane"/>
    <property type="evidence" value="ECO:0007669"/>
    <property type="project" value="UniProtKB-SubCell"/>
</dbReference>
<dbReference type="GO" id="GO:0098552">
    <property type="term" value="C:side of membrane"/>
    <property type="evidence" value="ECO:0007669"/>
    <property type="project" value="UniProtKB-KW"/>
</dbReference>
<dbReference type="GO" id="GO:0008253">
    <property type="term" value="F:5'-nucleotidase activity"/>
    <property type="evidence" value="ECO:0007669"/>
    <property type="project" value="UniProtKB-EC"/>
</dbReference>
<dbReference type="GO" id="GO:0046872">
    <property type="term" value="F:metal ion binding"/>
    <property type="evidence" value="ECO:0007669"/>
    <property type="project" value="UniProtKB-KW"/>
</dbReference>
<dbReference type="GO" id="GO:0000166">
    <property type="term" value="F:nucleotide binding"/>
    <property type="evidence" value="ECO:0007669"/>
    <property type="project" value="UniProtKB-KW"/>
</dbReference>
<dbReference type="GO" id="GO:0006196">
    <property type="term" value="P:AMP catabolic process"/>
    <property type="evidence" value="ECO:0007669"/>
    <property type="project" value="TreeGrafter"/>
</dbReference>
<dbReference type="CDD" id="cd07409">
    <property type="entry name" value="MPP_CD73_N"/>
    <property type="match status" value="1"/>
</dbReference>
<dbReference type="FunFam" id="3.90.780.10:FF:000001">
    <property type="entry name" value="NT5E isoform 3"/>
    <property type="match status" value="1"/>
</dbReference>
<dbReference type="FunFam" id="3.60.21.10:FF:000020">
    <property type="entry name" value="NT5E isoform 4"/>
    <property type="match status" value="1"/>
</dbReference>
<dbReference type="Gene3D" id="3.60.21.10">
    <property type="match status" value="1"/>
</dbReference>
<dbReference type="Gene3D" id="3.90.780.10">
    <property type="entry name" value="5'-Nucleotidase, C-terminal domain"/>
    <property type="match status" value="1"/>
</dbReference>
<dbReference type="InterPro" id="IPR008334">
    <property type="entry name" value="5'-Nucleotdase_C"/>
</dbReference>
<dbReference type="InterPro" id="IPR036907">
    <property type="entry name" value="5'-Nucleotdase_C_sf"/>
</dbReference>
<dbReference type="InterPro" id="IPR006146">
    <property type="entry name" value="5'-Nucleotdase_CS"/>
</dbReference>
<dbReference type="InterPro" id="IPR006179">
    <property type="entry name" value="5_nucleotidase/apyrase"/>
</dbReference>
<dbReference type="InterPro" id="IPR004843">
    <property type="entry name" value="Calcineurin-like_PHP_ApaH"/>
</dbReference>
<dbReference type="InterPro" id="IPR029052">
    <property type="entry name" value="Metallo-depent_PP-like"/>
</dbReference>
<dbReference type="PANTHER" id="PTHR11575:SF24">
    <property type="entry name" value="5'-NUCLEOTIDASE"/>
    <property type="match status" value="1"/>
</dbReference>
<dbReference type="PANTHER" id="PTHR11575">
    <property type="entry name" value="5'-NUCLEOTIDASE-RELATED"/>
    <property type="match status" value="1"/>
</dbReference>
<dbReference type="Pfam" id="PF02872">
    <property type="entry name" value="5_nucleotid_C"/>
    <property type="match status" value="1"/>
</dbReference>
<dbReference type="Pfam" id="PF00149">
    <property type="entry name" value="Metallophos"/>
    <property type="match status" value="1"/>
</dbReference>
<dbReference type="PRINTS" id="PR01607">
    <property type="entry name" value="APYRASEFAMLY"/>
</dbReference>
<dbReference type="SUPFAM" id="SSF55816">
    <property type="entry name" value="5'-nucleotidase (syn. UDP-sugar hydrolase), C-terminal domain"/>
    <property type="match status" value="1"/>
</dbReference>
<dbReference type="SUPFAM" id="SSF56300">
    <property type="entry name" value="Metallo-dependent phosphatases"/>
    <property type="match status" value="1"/>
</dbReference>
<dbReference type="PROSITE" id="PS00785">
    <property type="entry name" value="5_NUCLEOTIDASE_1"/>
    <property type="match status" value="1"/>
</dbReference>
<dbReference type="PROSITE" id="PS00786">
    <property type="entry name" value="5_NUCLEOTIDASE_2"/>
    <property type="match status" value="1"/>
</dbReference>
<name>5NTD_DIPOM</name>
<feature type="signal peptide">
    <location>
        <begin position="1"/>
        <end position="30"/>
    </location>
</feature>
<feature type="chain" id="PRO_0000000024" description="5'-nucleotidase">
    <location>
        <begin position="31"/>
        <end position="552"/>
    </location>
</feature>
<feature type="propeptide" id="PRO_0000000025" description="Removed in mature form">
    <location>
        <begin position="553"/>
        <end position="577"/>
    </location>
</feature>
<feature type="binding site" evidence="1">
    <location>
        <position position="39"/>
    </location>
    <ligand>
        <name>Zn(2+)</name>
        <dbReference type="ChEBI" id="CHEBI:29105"/>
        <label>1</label>
    </ligand>
</feature>
<feature type="binding site" evidence="1">
    <location>
        <position position="41"/>
    </location>
    <ligand>
        <name>Zn(2+)</name>
        <dbReference type="ChEBI" id="CHEBI:29105"/>
        <label>1</label>
    </ligand>
</feature>
<feature type="binding site" evidence="1">
    <location>
        <position position="86"/>
    </location>
    <ligand>
        <name>Zn(2+)</name>
        <dbReference type="ChEBI" id="CHEBI:29105"/>
        <label>1</label>
    </ligand>
</feature>
<feature type="binding site" evidence="1">
    <location>
        <position position="86"/>
    </location>
    <ligand>
        <name>Zn(2+)</name>
        <dbReference type="ChEBI" id="CHEBI:29105"/>
        <label>2</label>
    </ligand>
</feature>
<feature type="binding site" evidence="1">
    <location>
        <position position="118"/>
    </location>
    <ligand>
        <name>Zn(2+)</name>
        <dbReference type="ChEBI" id="CHEBI:29105"/>
        <label>2</label>
    </ligand>
</feature>
<feature type="binding site" evidence="1">
    <location>
        <position position="221"/>
    </location>
    <ligand>
        <name>Zn(2+)</name>
        <dbReference type="ChEBI" id="CHEBI:29105"/>
        <label>2</label>
    </ligand>
</feature>
<feature type="binding site" evidence="1">
    <location>
        <position position="244"/>
    </location>
    <ligand>
        <name>Zn(2+)</name>
        <dbReference type="ChEBI" id="CHEBI:29105"/>
        <label>2</label>
    </ligand>
</feature>
<feature type="binding site" evidence="1">
    <location>
        <position position="246"/>
    </location>
    <ligand>
        <name>substrate</name>
    </ligand>
</feature>
<feature type="binding site" evidence="1">
    <location>
        <position position="354"/>
    </location>
    <ligand>
        <name>substrate</name>
    </ligand>
</feature>
<feature type="binding site" evidence="1">
    <location>
        <position position="390"/>
    </location>
    <ligand>
        <name>substrate</name>
    </ligand>
</feature>
<feature type="binding site" evidence="1">
    <location>
        <position position="395"/>
    </location>
    <ligand>
        <name>substrate</name>
    </ligand>
</feature>
<feature type="binding site" evidence="1">
    <location>
        <position position="417"/>
    </location>
    <ligand>
        <name>substrate</name>
    </ligand>
</feature>
<feature type="binding site" evidence="1">
    <location>
        <begin position="500"/>
        <end position="506"/>
    </location>
    <ligand>
        <name>substrate</name>
    </ligand>
</feature>
<feature type="site" description="Transition state stabilizer" evidence="1">
    <location>
        <position position="119"/>
    </location>
</feature>
<feature type="site" description="Transition state stabilizer" evidence="1">
    <location>
        <position position="122"/>
    </location>
</feature>
<feature type="lipid moiety-binding region" description="GPI-anchor amidated serine" evidence="1">
    <location>
        <position position="552"/>
    </location>
</feature>
<feature type="glycosylation site" description="N-linked (GlcNAc...) asparagine" evidence="2">
    <location>
        <position position="135"/>
    </location>
</feature>
<feature type="glycosylation site" description="N-linked (GlcNAc...) asparagine" evidence="2">
    <location>
        <position position="311"/>
    </location>
</feature>
<feature type="glycosylation site" description="N-linked (GlcNAc...) asparagine" evidence="2">
    <location>
        <position position="347"/>
    </location>
</feature>
<feature type="glycosylation site" description="N-linked (GlcNAc...) asparagine" evidence="2">
    <location>
        <position position="403"/>
    </location>
</feature>
<feature type="disulfide bond" evidence="1">
    <location>
        <begin position="353"/>
        <end position="358"/>
    </location>
</feature>
<feature type="disulfide bond" evidence="1">
    <location>
        <begin position="365"/>
        <end position="387"/>
    </location>
</feature>
<feature type="disulfide bond" evidence="1">
    <location>
        <begin position="476"/>
        <end position="479"/>
    </location>
</feature>
<sequence length="577" mass="63613">MPRVPSASATGSSALLSLLCAFSLGRAAPFQLTILHTNDVHARVEETNQDSGKCFTQSFAGVARRWTKIEELRARDKNVLLLDAGDQYQGTIWFNYYKGAEAAHFIEAVGYNAMALGNHEFDNGAEGLLDPFLLNVSFPVLSANLEQGEDQVPSLIGYYKPSTVLDVNGEKIGVVGYTSKETPTLSSPGPHLIFKDEIQAVQHEVDILVSQGIDKIIALGHSGFETDKLIAQKVRGVDVVVGGHSNTFLYTGKAPSNDVPVGPYPFLVNSDDQRTIPVVQAYAYGKYLGYLKLTFDKGEVIKREGNPILLNSSIIQDPVLLAEVNKWKESLANFGKEVIGRTVVYLNGTTEECRNRECNMGNLICDAMIQQNIRNPDEKFWNHVSICIFQGGGIRAPINEQNNGTIQVDSLLAVLPFGSTIDLLEVYGSTLRAAFDHSVRRYGQNTGEFLQVSGIQVQFNLKRPPGSRVVKIDVLCADCRVPHYQPLLDNKIYKIVTNSYIAEGGDGFTMLKNERLRYDTGSTDISVVSSYIKQMKVVYPAVEGRILFVENSATLPIINLKIGLSLFAFLTWFLHCS</sequence>
<reference key="1">
    <citation type="journal article" date="1991" name="Eur. J. Biochem.">
        <title>5'-nucleotidase from the electric ray electric lobe. Primary structure and relation to mammalian and procaryotic enzymes.</title>
        <authorList>
            <person name="Volknandt W."/>
            <person name="Vogel M."/>
            <person name="Pevsner J."/>
            <person name="Misumi Y."/>
            <person name="Ikehara Y."/>
            <person name="Zimmermann H."/>
        </authorList>
    </citation>
    <scope>NUCLEOTIDE SEQUENCE [MRNA]</scope>
    <source>
        <tissue>Electric lobe</tissue>
    </source>
</reference>